<organism>
    <name type="scientific">Caenorhabditis briggsae</name>
    <dbReference type="NCBI Taxonomy" id="6238"/>
    <lineage>
        <taxon>Eukaryota</taxon>
        <taxon>Metazoa</taxon>
        <taxon>Ecdysozoa</taxon>
        <taxon>Nematoda</taxon>
        <taxon>Chromadorea</taxon>
        <taxon>Rhabditida</taxon>
        <taxon>Rhabditina</taxon>
        <taxon>Rhabditomorpha</taxon>
        <taxon>Rhabditoidea</taxon>
        <taxon>Rhabditidae</taxon>
        <taxon>Peloderinae</taxon>
        <taxon>Caenorhabditis</taxon>
    </lineage>
</organism>
<name>KDM5_CAEBR</name>
<feature type="chain" id="PRO_0000292419" description="Lysine-specific demethylase rbr-2">
    <location>
        <begin position="1"/>
        <end position="1482"/>
    </location>
</feature>
<feature type="domain" description="JmjN" evidence="5">
    <location>
        <begin position="61"/>
        <end position="102"/>
    </location>
</feature>
<feature type="domain" description="ARID" evidence="4">
    <location>
        <begin position="126"/>
        <end position="223"/>
    </location>
</feature>
<feature type="domain" description="JmjC" evidence="6">
    <location>
        <begin position="471"/>
        <end position="637"/>
    </location>
</feature>
<feature type="zinc finger region" description="PHD-type 1" evidence="3">
    <location>
        <begin position="322"/>
        <end position="374"/>
    </location>
</feature>
<feature type="zinc finger region" description="PHD-type 2" evidence="3">
    <location>
        <begin position="1206"/>
        <end position="1260"/>
    </location>
</feature>
<feature type="zinc finger region" description="PHD-type 3" evidence="3">
    <location>
        <begin position="1416"/>
        <end position="1471"/>
    </location>
</feature>
<feature type="region of interest" description="Disordered" evidence="7">
    <location>
        <begin position="1"/>
        <end position="45"/>
    </location>
</feature>
<feature type="region of interest" description="Disordered" evidence="7">
    <location>
        <begin position="244"/>
        <end position="316"/>
    </location>
</feature>
<feature type="region of interest" description="Disordered" evidence="7">
    <location>
        <begin position="1361"/>
        <end position="1403"/>
    </location>
</feature>
<feature type="compositionally biased region" description="Low complexity" evidence="7">
    <location>
        <begin position="11"/>
        <end position="20"/>
    </location>
</feature>
<feature type="compositionally biased region" description="Polar residues" evidence="7">
    <location>
        <begin position="30"/>
        <end position="41"/>
    </location>
</feature>
<feature type="compositionally biased region" description="Basic and acidic residues" evidence="7">
    <location>
        <begin position="251"/>
        <end position="264"/>
    </location>
</feature>
<feature type="compositionally biased region" description="Basic residues" evidence="7">
    <location>
        <begin position="277"/>
        <end position="288"/>
    </location>
</feature>
<feature type="binding site" evidence="6">
    <location>
        <position position="517"/>
    </location>
    <ligand>
        <name>Fe cation</name>
        <dbReference type="ChEBI" id="CHEBI:24875"/>
        <note>catalytic</note>
    </ligand>
</feature>
<feature type="binding site" evidence="6">
    <location>
        <position position="520"/>
    </location>
    <ligand>
        <name>Fe cation</name>
        <dbReference type="ChEBI" id="CHEBI:24875"/>
        <note>catalytic</note>
    </ligand>
</feature>
<feature type="binding site" evidence="6">
    <location>
        <position position="605"/>
    </location>
    <ligand>
        <name>Fe cation</name>
        <dbReference type="ChEBI" id="CHEBI:24875"/>
        <note>catalytic</note>
    </ligand>
</feature>
<gene>
    <name type="primary">rbr-2</name>
    <name type="ORF">CBG05959</name>
</gene>
<reference key="1">
    <citation type="journal article" date="2003" name="PLoS Biol.">
        <title>The genome sequence of Caenorhabditis briggsae: a platform for comparative genomics.</title>
        <authorList>
            <person name="Stein L.D."/>
            <person name="Bao Z."/>
            <person name="Blasiar D."/>
            <person name="Blumenthal T."/>
            <person name="Brent M.R."/>
            <person name="Chen N."/>
            <person name="Chinwalla A."/>
            <person name="Clarke L."/>
            <person name="Clee C."/>
            <person name="Coghlan A."/>
            <person name="Coulson A."/>
            <person name="D'Eustachio P."/>
            <person name="Fitch D.H.A."/>
            <person name="Fulton L.A."/>
            <person name="Fulton R.E."/>
            <person name="Griffiths-Jones S."/>
            <person name="Harris T.W."/>
            <person name="Hillier L.W."/>
            <person name="Kamath R."/>
            <person name="Kuwabara P.E."/>
            <person name="Mardis E.R."/>
            <person name="Marra M.A."/>
            <person name="Miner T.L."/>
            <person name="Minx P."/>
            <person name="Mullikin J.C."/>
            <person name="Plumb R.W."/>
            <person name="Rogers J."/>
            <person name="Schein J.E."/>
            <person name="Sohrmann M."/>
            <person name="Spieth J."/>
            <person name="Stajich J.E."/>
            <person name="Wei C."/>
            <person name="Willey D."/>
            <person name="Wilson R.K."/>
            <person name="Durbin R.M."/>
            <person name="Waterston R.H."/>
        </authorList>
    </citation>
    <scope>NUCLEOTIDE SEQUENCE [LARGE SCALE GENOMIC DNA]</scope>
    <source>
        <strain>AF16</strain>
    </source>
</reference>
<keyword id="KW-0156">Chromatin regulator</keyword>
<keyword id="KW-0175">Coiled coil</keyword>
<keyword id="KW-0223">Dioxygenase</keyword>
<keyword id="KW-0408">Iron</keyword>
<keyword id="KW-0479">Metal-binding</keyword>
<keyword id="KW-0539">Nucleus</keyword>
<keyword id="KW-0560">Oxidoreductase</keyword>
<keyword id="KW-1185">Reference proteome</keyword>
<keyword id="KW-0677">Repeat</keyword>
<keyword id="KW-0804">Transcription</keyword>
<keyword id="KW-0805">Transcription regulation</keyword>
<keyword id="KW-0862">Zinc</keyword>
<keyword id="KW-0863">Zinc-finger</keyword>
<proteinExistence type="inferred from homology"/>
<sequence length="1482" mass="170811">MRGRRQEDIATTSSAPSTSTSHKKKTVSSNGSFRPRTQSNPGGKMEMYDHFYKNFQRPPMAPVYYPTSEEFADPIEYVAKIRPDAERYGVVKIVPPSDFKPPFAIDKEKFTFRPRTQKLNEVEAIVKEKHTFIERLVNFNRYSGLQFEFPVDRDGNVVDLYRLHRIVQNFGGCEEVNDEERWRDVAREYLPKEQMTRGVPSYFINLIRAHYNLHIEPFNRNLKEKAMKNEDESDDELEELKHKYQHHHGTMRSEPENTDGKNTEDVEEECPMSMQSGRRRSKNKKPVPAKKSSNGTPKKGSRGKKNSKTEEDEEENEDVIEQVYCVSCNEGKDEDLLLLCDIEGCNSGRHTYCCDPVLDEVPEGEWRCPKCIESEDAKIGLDWGFYDAETEYNLNTFTEFANKWKCDYFGVDNVSKVSCDALEKEFWKNVVSHDNPVAVKYGADLITSRVGSGFPRKEDKHTGPDSKLKQQYANHAWNLNNMPVLSESVLSYFNTGISGMMVPWVYVGMCFSTFCWHTEDHWTYSVNYNHFGERKIWYGVGGDDAEKFEEALKRLAPGLTGRQRDLFHHMTTAANPSLLRSLGVPIYSVHQNAGEFVITFPRAYHAGYNEGLNFAEAVNFAPIDWLAKGRECVQSYSNVRRYLVFSHDELLFKMIEAMDRLGLSTTLAAYDELKRVIEKQKRLRQFIAQLGVPARNVEQVAFEKIPDEQRSCRFCKTTLFMCALICNKHKRMTCVEHHDHLCKTCTPKDYKYQYRYEIDNLTHLFDELGKRTVDTAGWQEDDDDMYTQEEMPKLEPMVDLYNVEEQSSSRQKNQVHNIIAIQHTAKSAIEKANQLLFKKVRTRTKTRCQRADTRTDADGVKSLIEQMQGMDCNLSGLIDKLQKFLDQIDAWRSKAQIMMSQEHKYSKDDFEHFIEEGDEYDIKLSEIEELRKVVGMKEWSERAIEITSWAPTSNMEKDIDFEYKMRYTNKDVIALIREGSRSSSNHTSQLIAKLQHMLAEANKREAEATEYFDNPSLDKLQSIWKNLRTSDWFYEPYINLVRFEIGQIAKIKSMIDSTIPALSGLDLKPQLLRLGDSSITFAKAVELSKACELSKTLHKSQEHSSLLELINRMNLFTERIAKLFKPMNSYHNLFEIVSERDDLTPLAEGQVLQLYYQGETINSGNEWHQIKDFDSLEQMLHHQSSLREMQSRIFEKVKQTNSARGLEGCCCLGGNKSDSSESVLSCIMCESQFHVRCCEWSTFFQHLPKGCFMCVRCLRGQRPVIDDVANALNGTPSGCMETHLVRNLIQKSRIITQNLMDCSNKRQSGEVASDEMCKKALFDWLACEIMNPNGLPKAVELIHEFFGDYLEKQASAALELQQRPVKSKPSASLFDPKLNSKRKRPNPSQKDSSKSKSRKRQGQISPIDYCEEETEFKSCQARSCLKPFGDSVNWVMCDAGCKNWFHVICVGFTLREINDMHEYRCSSCLDHADSPASSVSTE</sequence>
<accession>Q61T02</accession>
<accession>A8X185</accession>
<protein>
    <recommendedName>
        <fullName>Lysine-specific demethylase rbr-2</fullName>
        <ecNumber evidence="2">1.14.11.67</ecNumber>
    </recommendedName>
    <alternativeName>
        <fullName>Histone demethylase rbr-2</fullName>
    </alternativeName>
    <alternativeName>
        <fullName>Jumonji/ARID domain-containing protein rbr-2</fullName>
    </alternativeName>
    <alternativeName>
        <fullName evidence="8">[histone H3]-trimethyl-L-lysine(4) demethylase rbr-2</fullName>
    </alternativeName>
</protein>
<dbReference type="EC" id="1.14.11.67" evidence="2"/>
<dbReference type="EMBL" id="HE600909">
    <property type="protein sequence ID" value="CAP26395.3"/>
    <property type="molecule type" value="Genomic_DNA"/>
</dbReference>
<dbReference type="SMR" id="Q61T02"/>
<dbReference type="FunCoup" id="Q61T02">
    <property type="interactions" value="3111"/>
</dbReference>
<dbReference type="STRING" id="6238.Q61T02"/>
<dbReference type="EnsemblMetazoa" id="CBG05959.1">
    <property type="protein sequence ID" value="CBG05959.1"/>
    <property type="gene ID" value="WBGene00028313"/>
</dbReference>
<dbReference type="WormBase" id="CBG05959">
    <property type="protein sequence ID" value="CBP37609"/>
    <property type="gene ID" value="WBGene00028313"/>
    <property type="gene designation" value="Cbr-rbr-2"/>
</dbReference>
<dbReference type="eggNOG" id="KOG1246">
    <property type="taxonomic scope" value="Eukaryota"/>
</dbReference>
<dbReference type="HOGENOM" id="CLU_000991_2_2_1"/>
<dbReference type="InParanoid" id="Q61T02"/>
<dbReference type="OMA" id="CKTTLFM"/>
<dbReference type="Proteomes" id="UP000008549">
    <property type="component" value="Unassembled WGS sequence"/>
</dbReference>
<dbReference type="GO" id="GO:0000785">
    <property type="term" value="C:chromatin"/>
    <property type="evidence" value="ECO:0000318"/>
    <property type="project" value="GO_Central"/>
</dbReference>
<dbReference type="GO" id="GO:0005634">
    <property type="term" value="C:nucleus"/>
    <property type="evidence" value="ECO:0000318"/>
    <property type="project" value="GO_Central"/>
</dbReference>
<dbReference type="GO" id="GO:0003677">
    <property type="term" value="F:DNA binding"/>
    <property type="evidence" value="ECO:0007669"/>
    <property type="project" value="InterPro"/>
</dbReference>
<dbReference type="GO" id="GO:0034647">
    <property type="term" value="F:histone H3K4me/H3K4me2/H3K4me3 demethylase activity"/>
    <property type="evidence" value="ECO:0000318"/>
    <property type="project" value="GO_Central"/>
</dbReference>
<dbReference type="GO" id="GO:0008270">
    <property type="term" value="F:zinc ion binding"/>
    <property type="evidence" value="ECO:0007669"/>
    <property type="project" value="UniProtKB-KW"/>
</dbReference>
<dbReference type="GO" id="GO:0006338">
    <property type="term" value="P:chromatin remodeling"/>
    <property type="evidence" value="ECO:0000318"/>
    <property type="project" value="GO_Central"/>
</dbReference>
<dbReference type="GO" id="GO:0008340">
    <property type="term" value="P:determination of adult lifespan"/>
    <property type="evidence" value="ECO:0007669"/>
    <property type="project" value="EnsemblMetazoa"/>
</dbReference>
<dbReference type="GO" id="GO:0006355">
    <property type="term" value="P:regulation of DNA-templated transcription"/>
    <property type="evidence" value="ECO:0000318"/>
    <property type="project" value="GO_Central"/>
</dbReference>
<dbReference type="GO" id="GO:0040028">
    <property type="term" value="P:regulation of vulval development"/>
    <property type="evidence" value="ECO:0007669"/>
    <property type="project" value="EnsemblMetazoa"/>
</dbReference>
<dbReference type="CDD" id="cd16100">
    <property type="entry name" value="ARID"/>
    <property type="match status" value="1"/>
</dbReference>
<dbReference type="CDD" id="cd15610">
    <property type="entry name" value="PHD3_KDM5A_like"/>
    <property type="match status" value="1"/>
</dbReference>
<dbReference type="FunFam" id="2.60.120.650:FF:000036">
    <property type="entry name" value="Lysine-specific demethylase rbr-2"/>
    <property type="match status" value="1"/>
</dbReference>
<dbReference type="FunFam" id="1.10.150.60:FF:000016">
    <property type="entry name" value="Putative Lysine-specific demethylase 5B"/>
    <property type="match status" value="1"/>
</dbReference>
<dbReference type="Gene3D" id="1.10.150.60">
    <property type="entry name" value="ARID DNA-binding domain"/>
    <property type="match status" value="1"/>
</dbReference>
<dbReference type="Gene3D" id="2.60.120.650">
    <property type="entry name" value="Cupin"/>
    <property type="match status" value="2"/>
</dbReference>
<dbReference type="Gene3D" id="3.30.40.10">
    <property type="entry name" value="Zinc/RING finger domain, C3HC4 (zinc finger)"/>
    <property type="match status" value="2"/>
</dbReference>
<dbReference type="InterPro" id="IPR001606">
    <property type="entry name" value="ARID_dom"/>
</dbReference>
<dbReference type="InterPro" id="IPR036431">
    <property type="entry name" value="ARID_dom_sf"/>
</dbReference>
<dbReference type="InterPro" id="IPR003347">
    <property type="entry name" value="JmjC_dom"/>
</dbReference>
<dbReference type="InterPro" id="IPR003349">
    <property type="entry name" value="JmjN"/>
</dbReference>
<dbReference type="InterPro" id="IPR048615">
    <property type="entry name" value="KDM5_C-hel"/>
</dbReference>
<dbReference type="InterPro" id="IPR013637">
    <property type="entry name" value="Lys_sp_deMease-like_dom"/>
</dbReference>
<dbReference type="InterPro" id="IPR004198">
    <property type="entry name" value="Znf_C5HC2"/>
</dbReference>
<dbReference type="InterPro" id="IPR011011">
    <property type="entry name" value="Znf_FYVE_PHD"/>
</dbReference>
<dbReference type="InterPro" id="IPR001965">
    <property type="entry name" value="Znf_PHD"/>
</dbReference>
<dbReference type="InterPro" id="IPR019787">
    <property type="entry name" value="Znf_PHD-finger"/>
</dbReference>
<dbReference type="InterPro" id="IPR013083">
    <property type="entry name" value="Znf_RING/FYVE/PHD"/>
</dbReference>
<dbReference type="PANTHER" id="PTHR10694">
    <property type="entry name" value="LYSINE-SPECIFIC DEMETHYLASE"/>
    <property type="match status" value="1"/>
</dbReference>
<dbReference type="PANTHER" id="PTHR10694:SF33">
    <property type="entry name" value="LYSINE-SPECIFIC DEMETHYLASE 5"/>
    <property type="match status" value="1"/>
</dbReference>
<dbReference type="Pfam" id="PF01388">
    <property type="entry name" value="ARID"/>
    <property type="match status" value="1"/>
</dbReference>
<dbReference type="Pfam" id="PF02373">
    <property type="entry name" value="JmjC"/>
    <property type="match status" value="1"/>
</dbReference>
<dbReference type="Pfam" id="PF02375">
    <property type="entry name" value="JmjN"/>
    <property type="match status" value="1"/>
</dbReference>
<dbReference type="Pfam" id="PF21323">
    <property type="entry name" value="KDM5_C-hel"/>
    <property type="match status" value="1"/>
</dbReference>
<dbReference type="Pfam" id="PF00628">
    <property type="entry name" value="PHD"/>
    <property type="match status" value="1"/>
</dbReference>
<dbReference type="Pfam" id="PF08429">
    <property type="entry name" value="PLU-1"/>
    <property type="match status" value="1"/>
</dbReference>
<dbReference type="Pfam" id="PF02928">
    <property type="entry name" value="zf-C5HC2"/>
    <property type="match status" value="1"/>
</dbReference>
<dbReference type="SMART" id="SM01014">
    <property type="entry name" value="ARID"/>
    <property type="match status" value="1"/>
</dbReference>
<dbReference type="SMART" id="SM00501">
    <property type="entry name" value="BRIGHT"/>
    <property type="match status" value="1"/>
</dbReference>
<dbReference type="SMART" id="SM00558">
    <property type="entry name" value="JmjC"/>
    <property type="match status" value="1"/>
</dbReference>
<dbReference type="SMART" id="SM00545">
    <property type="entry name" value="JmjN"/>
    <property type="match status" value="1"/>
</dbReference>
<dbReference type="SMART" id="SM00249">
    <property type="entry name" value="PHD"/>
    <property type="match status" value="3"/>
</dbReference>
<dbReference type="SUPFAM" id="SSF46774">
    <property type="entry name" value="ARID-like"/>
    <property type="match status" value="1"/>
</dbReference>
<dbReference type="SUPFAM" id="SSF51197">
    <property type="entry name" value="Clavaminate synthase-like"/>
    <property type="match status" value="1"/>
</dbReference>
<dbReference type="SUPFAM" id="SSF57903">
    <property type="entry name" value="FYVE/PHD zinc finger"/>
    <property type="match status" value="2"/>
</dbReference>
<dbReference type="PROSITE" id="PS51011">
    <property type="entry name" value="ARID"/>
    <property type="match status" value="1"/>
</dbReference>
<dbReference type="PROSITE" id="PS51184">
    <property type="entry name" value="JMJC"/>
    <property type="match status" value="1"/>
</dbReference>
<dbReference type="PROSITE" id="PS51183">
    <property type="entry name" value="JMJN"/>
    <property type="match status" value="1"/>
</dbReference>
<dbReference type="PROSITE" id="PS01359">
    <property type="entry name" value="ZF_PHD_1"/>
    <property type="match status" value="1"/>
</dbReference>
<dbReference type="PROSITE" id="PS50016">
    <property type="entry name" value="ZF_PHD_2"/>
    <property type="match status" value="1"/>
</dbReference>
<comment type="function">
    <text evidence="2">Histone demethylase that specifically demethylates 'Lys-4' of histone H3, thereby playing a central role in histone code. Does not demethylate histone H3 'Lys-9', H3 'Lys-27', H3 'Lys-36', H3 'Lys-79' or H4 'Lys-20'. Demethylates trimethylated and dimethylated but not monomethylated H3 'Lys-4'. Involved in larval development and vulva formation.</text>
</comment>
<comment type="catalytic activity">
    <reaction evidence="2">
        <text>N(6),N(6),N(6)-trimethyl-L-lysyl(4)-[histone H3] + 3 2-oxoglutarate + 3 O2 = L-lysyl(4)-[histone H3] + 3 formaldehyde + 3 succinate + 3 CO2</text>
        <dbReference type="Rhea" id="RHEA:60208"/>
        <dbReference type="Rhea" id="RHEA-COMP:15537"/>
        <dbReference type="Rhea" id="RHEA-COMP:15547"/>
        <dbReference type="ChEBI" id="CHEBI:15379"/>
        <dbReference type="ChEBI" id="CHEBI:16526"/>
        <dbReference type="ChEBI" id="CHEBI:16810"/>
        <dbReference type="ChEBI" id="CHEBI:16842"/>
        <dbReference type="ChEBI" id="CHEBI:29969"/>
        <dbReference type="ChEBI" id="CHEBI:30031"/>
        <dbReference type="ChEBI" id="CHEBI:61961"/>
        <dbReference type="EC" id="1.14.11.67"/>
    </reaction>
</comment>
<comment type="cofactor">
    <cofactor evidence="1">
        <name>Fe(2+)</name>
        <dbReference type="ChEBI" id="CHEBI:29033"/>
    </cofactor>
    <text evidence="1">Binds 1 Fe(2+) ion per subunit.</text>
</comment>
<comment type="subcellular location">
    <subcellularLocation>
        <location evidence="4 5">Nucleus</location>
    </subcellularLocation>
</comment>
<comment type="similarity">
    <text evidence="8">Belongs to the JARID1 histone demethylase family.</text>
</comment>
<evidence type="ECO:0000250" key="1"/>
<evidence type="ECO:0000250" key="2">
    <source>
        <dbReference type="UniProtKB" id="Q23541"/>
    </source>
</evidence>
<evidence type="ECO:0000255" key="3">
    <source>
        <dbReference type="PROSITE-ProRule" id="PRU00146"/>
    </source>
</evidence>
<evidence type="ECO:0000255" key="4">
    <source>
        <dbReference type="PROSITE-ProRule" id="PRU00355"/>
    </source>
</evidence>
<evidence type="ECO:0000255" key="5">
    <source>
        <dbReference type="PROSITE-ProRule" id="PRU00537"/>
    </source>
</evidence>
<evidence type="ECO:0000255" key="6">
    <source>
        <dbReference type="PROSITE-ProRule" id="PRU00538"/>
    </source>
</evidence>
<evidence type="ECO:0000256" key="7">
    <source>
        <dbReference type="SAM" id="MobiDB-lite"/>
    </source>
</evidence>
<evidence type="ECO:0000305" key="8"/>